<reference key="1">
    <citation type="journal article" date="1996" name="Gene">
        <title>Cloning and characterization of three laccase genes from the white-rot basidiomycete Trametes villosa: genomic organization of the laccase gene family.</title>
        <authorList>
            <person name="Yaver D.S."/>
            <person name="Golightly E.J."/>
        </authorList>
    </citation>
    <scope>NUCLEOTIDE SEQUENCE [GENOMIC DNA]</scope>
</reference>
<evidence type="ECO:0000250" key="1">
    <source>
        <dbReference type="UniProtKB" id="D0VWU3"/>
    </source>
</evidence>
<evidence type="ECO:0000250" key="2">
    <source>
        <dbReference type="UniProtKB" id="Q70KY3"/>
    </source>
</evidence>
<evidence type="ECO:0000250" key="3">
    <source>
        <dbReference type="UniProtKB" id="Q99044"/>
    </source>
</evidence>
<evidence type="ECO:0000255" key="4"/>
<evidence type="ECO:0000305" key="5"/>
<protein>
    <recommendedName>
        <fullName>Laccase-3</fullName>
        <ecNumber evidence="2">1.10.3.2</ecNumber>
    </recommendedName>
    <alternativeName>
        <fullName>Benzenediol:oxygen oxidoreductase 3</fullName>
    </alternativeName>
    <alternativeName>
        <fullName>Diphenol oxidase 3</fullName>
    </alternativeName>
    <alternativeName>
        <fullName>Urishiol oxidase 3</fullName>
    </alternativeName>
</protein>
<name>LAC3_TRAVI</name>
<gene>
    <name type="primary">LCC3</name>
</gene>
<feature type="signal peptide" evidence="4">
    <location>
        <begin position="1"/>
        <end position="21"/>
    </location>
</feature>
<feature type="chain" id="PRO_0000002945" description="Laccase-3">
    <location>
        <begin position="22"/>
        <end position="473"/>
    </location>
</feature>
<feature type="domain" description="Plastocyanin-like 1">
    <location>
        <begin position="23"/>
        <end position="148"/>
    </location>
</feature>
<feature type="domain" description="Plastocyanin-like 2">
    <location>
        <begin position="160"/>
        <end position="298"/>
    </location>
</feature>
<feature type="domain" description="Plastocyanin-like 3">
    <location>
        <begin position="365"/>
        <end position="444"/>
    </location>
</feature>
<feature type="binding site" description="type 2 copper site" evidence="1">
    <location>
        <position position="85"/>
    </location>
    <ligand>
        <name>Cu cation</name>
        <dbReference type="ChEBI" id="CHEBI:23378"/>
        <label>1</label>
    </ligand>
</feature>
<feature type="binding site" description="type 3 copper site" evidence="1">
    <location>
        <position position="87"/>
    </location>
    <ligand>
        <name>Cu cation</name>
        <dbReference type="ChEBI" id="CHEBI:23378"/>
        <label>2</label>
    </ligand>
</feature>
<feature type="binding site" description="type 3 copper site" evidence="1">
    <location>
        <position position="130"/>
    </location>
    <ligand>
        <name>Cu cation</name>
        <dbReference type="ChEBI" id="CHEBI:23378"/>
        <label>2</label>
    </ligand>
</feature>
<feature type="binding site" description="type 3 copper site" evidence="1">
    <location>
        <position position="132"/>
    </location>
    <ligand>
        <name>Cu cation</name>
        <dbReference type="ChEBI" id="CHEBI:23378"/>
        <label>3</label>
    </ligand>
</feature>
<feature type="binding site" description="type 1 copper site" evidence="1">
    <location>
        <position position="410"/>
    </location>
    <ligand>
        <name>Cu cation</name>
        <dbReference type="ChEBI" id="CHEBI:23378"/>
        <label>4</label>
    </ligand>
</feature>
<feature type="binding site" description="type 2 copper site" evidence="1">
    <location>
        <position position="413"/>
    </location>
    <ligand>
        <name>Cu cation</name>
        <dbReference type="ChEBI" id="CHEBI:23378"/>
        <label>1</label>
    </ligand>
</feature>
<feature type="binding site" description="type 3 copper site" evidence="1">
    <location>
        <position position="415"/>
    </location>
    <ligand>
        <name>Cu cation</name>
        <dbReference type="ChEBI" id="CHEBI:23378"/>
        <label>3</label>
    </ligand>
</feature>
<feature type="binding site" description="type 3 copper site" evidence="1">
    <location>
        <position position="426"/>
    </location>
    <ligand>
        <name>Cu cation</name>
        <dbReference type="ChEBI" id="CHEBI:23378"/>
        <label>3</label>
    </ligand>
</feature>
<feature type="binding site" description="type 1 copper site" evidence="1">
    <location>
        <position position="427"/>
    </location>
    <ligand>
        <name>Cu cation</name>
        <dbReference type="ChEBI" id="CHEBI:23378"/>
        <label>4</label>
    </ligand>
</feature>
<feature type="binding site" description="type 3 copper site" evidence="1">
    <location>
        <position position="428"/>
    </location>
    <ligand>
        <name>Cu cation</name>
        <dbReference type="ChEBI" id="CHEBI:23378"/>
        <label>2</label>
    </ligand>
</feature>
<feature type="binding site" description="type 1 copper site" evidence="1">
    <location>
        <position position="432"/>
    </location>
    <ligand>
        <name>Cu cation</name>
        <dbReference type="ChEBI" id="CHEBI:23378"/>
        <label>4</label>
    </ligand>
</feature>
<feature type="glycosylation site" description="N-linked (GlcNAc...) asparagine" evidence="4">
    <location>
        <position position="75"/>
    </location>
</feature>
<feature type="glycosylation site" description="N-linked (GlcNAc...) asparagine" evidence="4">
    <location>
        <position position="226"/>
    </location>
</feature>
<feature type="glycosylation site" description="N-linked (GlcNAc...) asparagine" evidence="4">
    <location>
        <position position="283"/>
    </location>
</feature>
<feature type="glycosylation site" description="N-linked (GlcNAc...) asparagine" evidence="4">
    <location>
        <position position="309"/>
    </location>
</feature>
<feature type="glycosylation site" description="N-linked (GlcNAc...) asparagine" evidence="4">
    <location>
        <position position="346"/>
    </location>
</feature>
<feature type="glycosylation site" description="N-linked (GlcNAc...) asparagine" evidence="4">
    <location>
        <position position="350"/>
    </location>
</feature>
<feature type="glycosylation site" description="N-linked (GlcNAc...) asparagine" evidence="4">
    <location>
        <position position="374"/>
    </location>
</feature>
<feature type="glycosylation site" description="N-linked (GlcNAc...) asparagine" evidence="4">
    <location>
        <position position="470"/>
    </location>
</feature>
<feature type="disulfide bond" evidence="2">
    <location>
        <begin position="106"/>
        <end position="462"/>
    </location>
</feature>
<feature type="disulfide bond" evidence="1">
    <location>
        <begin position="138"/>
        <end position="221"/>
    </location>
</feature>
<dbReference type="EC" id="1.10.3.2" evidence="2"/>
<dbReference type="EMBL" id="L78076">
    <property type="protein sequence ID" value="AAB47733.1"/>
    <property type="molecule type" value="Genomic_DNA"/>
</dbReference>
<dbReference type="SMR" id="Q99049"/>
<dbReference type="GlyCosmos" id="Q99049">
    <property type="glycosylation" value="8 sites, No reported glycans"/>
</dbReference>
<dbReference type="GO" id="GO:0005576">
    <property type="term" value="C:extracellular region"/>
    <property type="evidence" value="ECO:0007669"/>
    <property type="project" value="UniProtKB-SubCell"/>
</dbReference>
<dbReference type="GO" id="GO:0005507">
    <property type="term" value="F:copper ion binding"/>
    <property type="evidence" value="ECO:0007669"/>
    <property type="project" value="InterPro"/>
</dbReference>
<dbReference type="GO" id="GO:0052716">
    <property type="term" value="F:hydroquinone:oxygen oxidoreductase activity"/>
    <property type="evidence" value="ECO:0007669"/>
    <property type="project" value="UniProtKB-EC"/>
</dbReference>
<dbReference type="GO" id="GO:0046274">
    <property type="term" value="P:lignin catabolic process"/>
    <property type="evidence" value="ECO:0007669"/>
    <property type="project" value="UniProtKB-KW"/>
</dbReference>
<dbReference type="CDD" id="cd13856">
    <property type="entry name" value="CuRO_1_Tv-LCC_like"/>
    <property type="match status" value="1"/>
</dbReference>
<dbReference type="FunFam" id="2.60.40.420:FF:000045">
    <property type="entry name" value="Laccase 2"/>
    <property type="match status" value="1"/>
</dbReference>
<dbReference type="FunFam" id="2.60.40.420:FF:000125">
    <property type="entry name" value="Laccase 2"/>
    <property type="match status" value="1"/>
</dbReference>
<dbReference type="Gene3D" id="2.60.40.420">
    <property type="entry name" value="Cupredoxins - blue copper proteins"/>
    <property type="match status" value="4"/>
</dbReference>
<dbReference type="InterPro" id="IPR011707">
    <property type="entry name" value="Cu-oxidase-like_N"/>
</dbReference>
<dbReference type="InterPro" id="IPR001117">
    <property type="entry name" value="Cu-oxidase_2nd"/>
</dbReference>
<dbReference type="InterPro" id="IPR011706">
    <property type="entry name" value="Cu-oxidase_C"/>
</dbReference>
<dbReference type="InterPro" id="IPR045087">
    <property type="entry name" value="Cu-oxidase_fam"/>
</dbReference>
<dbReference type="InterPro" id="IPR033138">
    <property type="entry name" value="Cu_oxidase_CS"/>
</dbReference>
<dbReference type="InterPro" id="IPR002355">
    <property type="entry name" value="Cu_oxidase_Cu_BS"/>
</dbReference>
<dbReference type="InterPro" id="IPR008972">
    <property type="entry name" value="Cupredoxin"/>
</dbReference>
<dbReference type="PANTHER" id="PTHR11709:SF394">
    <property type="entry name" value="FI03373P-RELATED"/>
    <property type="match status" value="1"/>
</dbReference>
<dbReference type="PANTHER" id="PTHR11709">
    <property type="entry name" value="MULTI-COPPER OXIDASE"/>
    <property type="match status" value="1"/>
</dbReference>
<dbReference type="Pfam" id="PF00394">
    <property type="entry name" value="Cu-oxidase"/>
    <property type="match status" value="1"/>
</dbReference>
<dbReference type="Pfam" id="PF07731">
    <property type="entry name" value="Cu-oxidase_2"/>
    <property type="match status" value="1"/>
</dbReference>
<dbReference type="Pfam" id="PF07732">
    <property type="entry name" value="Cu-oxidase_3"/>
    <property type="match status" value="1"/>
</dbReference>
<dbReference type="SUPFAM" id="SSF49503">
    <property type="entry name" value="Cupredoxins"/>
    <property type="match status" value="3"/>
</dbReference>
<dbReference type="PROSITE" id="PS00079">
    <property type="entry name" value="MULTICOPPER_OXIDASE1"/>
    <property type="match status" value="2"/>
</dbReference>
<dbReference type="PROSITE" id="PS00080">
    <property type="entry name" value="MULTICOPPER_OXIDASE2"/>
    <property type="match status" value="1"/>
</dbReference>
<proteinExistence type="inferred from homology"/>
<accession>Q99049</accession>
<sequence length="473" mass="51924">MSFSSLRRALVFLGACSSALASIGPVTELDIVNKVIAPDGVARDTVLAGGTFPGPLITGKKGDNFRINVVDKLVNQTMLTSTTIHWHGMFQHTTNWADGPAFVTQCPITTGDDFLYNFRVPDQTGTYWYHSHLALQYCDGLRGPLVIYDPHDPQAYLYDVDDESTVITLADWYHTPAPLLPPAATLINGLGRWPGNPTADLAVIEVQHGKRYRFRLVSTSCDPNYNFTIDGHTMTIIEADGQNTQPHQVDGLQIFAAQRYSFVLNANQAVNNYWIRANPNRANTTGFANGINSAILRYKGAPIKEPTTNQTTIRNFLWETDLHPLTDPRAPGLPFKGGVDHALNLNLTFNGSEFFINDAPFVPPTVPVLLQILNGTLDANDLLPPGSVYNLPPDSTIELSIPGGVTGGPHPFHLHGTDNPGPWFLHCHIDFHLQAGLAIVFAEDAQDTKLVNPVPEDWNKLCPTFDKAMNITV</sequence>
<comment type="function">
    <text evidence="2">Lignin degradation and detoxification of lignin-derived products.</text>
</comment>
<comment type="catalytic activity">
    <reaction evidence="2">
        <text>4 hydroquinone + O2 = 4 benzosemiquinone + 2 H2O</text>
        <dbReference type="Rhea" id="RHEA:11276"/>
        <dbReference type="ChEBI" id="CHEBI:15377"/>
        <dbReference type="ChEBI" id="CHEBI:15379"/>
        <dbReference type="ChEBI" id="CHEBI:17594"/>
        <dbReference type="ChEBI" id="CHEBI:17977"/>
        <dbReference type="EC" id="1.10.3.2"/>
    </reaction>
</comment>
<comment type="cofactor">
    <cofactor evidence="2">
        <name>Cu cation</name>
        <dbReference type="ChEBI" id="CHEBI:23378"/>
    </cofactor>
    <text evidence="2">Binds 4 Cu cations per monomer.</text>
</comment>
<comment type="subunit">
    <text evidence="3">Homodimer.</text>
</comment>
<comment type="subcellular location">
    <subcellularLocation>
        <location evidence="2">Secreted</location>
    </subcellularLocation>
</comment>
<comment type="similarity">
    <text evidence="5">Belongs to the multicopper oxidase family.</text>
</comment>
<organism>
    <name type="scientific">Trametes villosa</name>
    <name type="common">White-rot fungus</name>
    <dbReference type="NCBI Taxonomy" id="47662"/>
    <lineage>
        <taxon>Eukaryota</taxon>
        <taxon>Fungi</taxon>
        <taxon>Dikarya</taxon>
        <taxon>Basidiomycota</taxon>
        <taxon>Agaricomycotina</taxon>
        <taxon>Agaricomycetes</taxon>
        <taxon>Polyporales</taxon>
        <taxon>Polyporaceae</taxon>
        <taxon>Trametes</taxon>
    </lineage>
</organism>
<keyword id="KW-0186">Copper</keyword>
<keyword id="KW-1015">Disulfide bond</keyword>
<keyword id="KW-0325">Glycoprotein</keyword>
<keyword id="KW-0439">Lignin degradation</keyword>
<keyword id="KW-0479">Metal-binding</keyword>
<keyword id="KW-0560">Oxidoreductase</keyword>
<keyword id="KW-0677">Repeat</keyword>
<keyword id="KW-0964">Secreted</keyword>
<keyword id="KW-0732">Signal</keyword>